<evidence type="ECO:0000255" key="1"/>
<evidence type="ECO:0000255" key="2">
    <source>
        <dbReference type="PROSITE-ProRule" id="PRU10037"/>
    </source>
</evidence>
<evidence type="ECO:0000269" key="3">
    <source>
    </source>
</evidence>
<evidence type="ECO:0000305" key="4"/>
<protein>
    <recommendedName>
        <fullName>Lipase 3</fullName>
        <shortName>DmLip3</shortName>
        <ecNumber>3.1.1.-</ecNumber>
    </recommendedName>
</protein>
<proteinExistence type="evidence at transcript level"/>
<reference key="1">
    <citation type="journal article" date="1998" name="J. Mol. Biol.">
        <title>The Drosophila melanogaster lipase homologs: a gene family with tissue and developmental specific expression.</title>
        <authorList>
            <person name="Pistillo D."/>
            <person name="Manzi A."/>
            <person name="Tino A."/>
            <person name="Pilo Boyl P."/>
            <person name="Graziani F."/>
            <person name="Malva C."/>
        </authorList>
    </citation>
    <scope>NUCLEOTIDE SEQUENCE [MRNA]</scope>
    <scope>TISSUE SPECIFICITY</scope>
    <scope>DEVELOPMENTAL STAGE</scope>
    <source>
        <strain>Canton-S</strain>
    </source>
</reference>
<reference key="2">
    <citation type="journal article" date="2000" name="Science">
        <title>The genome sequence of Drosophila melanogaster.</title>
        <authorList>
            <person name="Adams M.D."/>
            <person name="Celniker S.E."/>
            <person name="Holt R.A."/>
            <person name="Evans C.A."/>
            <person name="Gocayne J.D."/>
            <person name="Amanatides P.G."/>
            <person name="Scherer S.E."/>
            <person name="Li P.W."/>
            <person name="Hoskins R.A."/>
            <person name="Galle R.F."/>
            <person name="George R.A."/>
            <person name="Lewis S.E."/>
            <person name="Richards S."/>
            <person name="Ashburner M."/>
            <person name="Henderson S.N."/>
            <person name="Sutton G.G."/>
            <person name="Wortman J.R."/>
            <person name="Yandell M.D."/>
            <person name="Zhang Q."/>
            <person name="Chen L.X."/>
            <person name="Brandon R.C."/>
            <person name="Rogers Y.-H.C."/>
            <person name="Blazej R.G."/>
            <person name="Champe M."/>
            <person name="Pfeiffer B.D."/>
            <person name="Wan K.H."/>
            <person name="Doyle C."/>
            <person name="Baxter E.G."/>
            <person name="Helt G."/>
            <person name="Nelson C.R."/>
            <person name="Miklos G.L.G."/>
            <person name="Abril J.F."/>
            <person name="Agbayani A."/>
            <person name="An H.-J."/>
            <person name="Andrews-Pfannkoch C."/>
            <person name="Baldwin D."/>
            <person name="Ballew R.M."/>
            <person name="Basu A."/>
            <person name="Baxendale J."/>
            <person name="Bayraktaroglu L."/>
            <person name="Beasley E.M."/>
            <person name="Beeson K.Y."/>
            <person name="Benos P.V."/>
            <person name="Berman B.P."/>
            <person name="Bhandari D."/>
            <person name="Bolshakov S."/>
            <person name="Borkova D."/>
            <person name="Botchan M.R."/>
            <person name="Bouck J."/>
            <person name="Brokstein P."/>
            <person name="Brottier P."/>
            <person name="Burtis K.C."/>
            <person name="Busam D.A."/>
            <person name="Butler H."/>
            <person name="Cadieu E."/>
            <person name="Center A."/>
            <person name="Chandra I."/>
            <person name="Cherry J.M."/>
            <person name="Cawley S."/>
            <person name="Dahlke C."/>
            <person name="Davenport L.B."/>
            <person name="Davies P."/>
            <person name="de Pablos B."/>
            <person name="Delcher A."/>
            <person name="Deng Z."/>
            <person name="Mays A.D."/>
            <person name="Dew I."/>
            <person name="Dietz S.M."/>
            <person name="Dodson K."/>
            <person name="Doup L.E."/>
            <person name="Downes M."/>
            <person name="Dugan-Rocha S."/>
            <person name="Dunkov B.C."/>
            <person name="Dunn P."/>
            <person name="Durbin K.J."/>
            <person name="Evangelista C.C."/>
            <person name="Ferraz C."/>
            <person name="Ferriera S."/>
            <person name="Fleischmann W."/>
            <person name="Fosler C."/>
            <person name="Gabrielian A.E."/>
            <person name="Garg N.S."/>
            <person name="Gelbart W.M."/>
            <person name="Glasser K."/>
            <person name="Glodek A."/>
            <person name="Gong F."/>
            <person name="Gorrell J.H."/>
            <person name="Gu Z."/>
            <person name="Guan P."/>
            <person name="Harris M."/>
            <person name="Harris N.L."/>
            <person name="Harvey D.A."/>
            <person name="Heiman T.J."/>
            <person name="Hernandez J.R."/>
            <person name="Houck J."/>
            <person name="Hostin D."/>
            <person name="Houston K.A."/>
            <person name="Howland T.J."/>
            <person name="Wei M.-H."/>
            <person name="Ibegwam C."/>
            <person name="Jalali M."/>
            <person name="Kalush F."/>
            <person name="Karpen G.H."/>
            <person name="Ke Z."/>
            <person name="Kennison J.A."/>
            <person name="Ketchum K.A."/>
            <person name="Kimmel B.E."/>
            <person name="Kodira C.D."/>
            <person name="Kraft C.L."/>
            <person name="Kravitz S."/>
            <person name="Kulp D."/>
            <person name="Lai Z."/>
            <person name="Lasko P."/>
            <person name="Lei Y."/>
            <person name="Levitsky A.A."/>
            <person name="Li J.H."/>
            <person name="Li Z."/>
            <person name="Liang Y."/>
            <person name="Lin X."/>
            <person name="Liu X."/>
            <person name="Mattei B."/>
            <person name="McIntosh T.C."/>
            <person name="McLeod M.P."/>
            <person name="McPherson D."/>
            <person name="Merkulov G."/>
            <person name="Milshina N.V."/>
            <person name="Mobarry C."/>
            <person name="Morris J."/>
            <person name="Moshrefi A."/>
            <person name="Mount S.M."/>
            <person name="Moy M."/>
            <person name="Murphy B."/>
            <person name="Murphy L."/>
            <person name="Muzny D.M."/>
            <person name="Nelson D.L."/>
            <person name="Nelson D.R."/>
            <person name="Nelson K.A."/>
            <person name="Nixon K."/>
            <person name="Nusskern D.R."/>
            <person name="Pacleb J.M."/>
            <person name="Palazzolo M."/>
            <person name="Pittman G.S."/>
            <person name="Pan S."/>
            <person name="Pollard J."/>
            <person name="Puri V."/>
            <person name="Reese M.G."/>
            <person name="Reinert K."/>
            <person name="Remington K."/>
            <person name="Saunders R.D.C."/>
            <person name="Scheeler F."/>
            <person name="Shen H."/>
            <person name="Shue B.C."/>
            <person name="Siden-Kiamos I."/>
            <person name="Simpson M."/>
            <person name="Skupski M.P."/>
            <person name="Smith T.J."/>
            <person name="Spier E."/>
            <person name="Spradling A.C."/>
            <person name="Stapleton M."/>
            <person name="Strong R."/>
            <person name="Sun E."/>
            <person name="Svirskas R."/>
            <person name="Tector C."/>
            <person name="Turner R."/>
            <person name="Venter E."/>
            <person name="Wang A.H."/>
            <person name="Wang X."/>
            <person name="Wang Z.-Y."/>
            <person name="Wassarman D.A."/>
            <person name="Weinstock G.M."/>
            <person name="Weissenbach J."/>
            <person name="Williams S.M."/>
            <person name="Woodage T."/>
            <person name="Worley K.C."/>
            <person name="Wu D."/>
            <person name="Yang S."/>
            <person name="Yao Q.A."/>
            <person name="Ye J."/>
            <person name="Yeh R.-F."/>
            <person name="Zaveri J.S."/>
            <person name="Zhan M."/>
            <person name="Zhang G."/>
            <person name="Zhao Q."/>
            <person name="Zheng L."/>
            <person name="Zheng X.H."/>
            <person name="Zhong F.N."/>
            <person name="Zhong W."/>
            <person name="Zhou X."/>
            <person name="Zhu S.C."/>
            <person name="Zhu X."/>
            <person name="Smith H.O."/>
            <person name="Gibbs R.A."/>
            <person name="Myers E.W."/>
            <person name="Rubin G.M."/>
            <person name="Venter J.C."/>
        </authorList>
    </citation>
    <scope>NUCLEOTIDE SEQUENCE [LARGE SCALE GENOMIC DNA]</scope>
    <source>
        <strain>Berkeley</strain>
    </source>
</reference>
<reference key="3">
    <citation type="journal article" date="2002" name="Genome Biol.">
        <title>Annotation of the Drosophila melanogaster euchromatic genome: a systematic review.</title>
        <authorList>
            <person name="Misra S."/>
            <person name="Crosby M.A."/>
            <person name="Mungall C.J."/>
            <person name="Matthews B.B."/>
            <person name="Campbell K.S."/>
            <person name="Hradecky P."/>
            <person name="Huang Y."/>
            <person name="Kaminker J.S."/>
            <person name="Millburn G.H."/>
            <person name="Prochnik S.E."/>
            <person name="Smith C.D."/>
            <person name="Tupy J.L."/>
            <person name="Whitfield E.J."/>
            <person name="Bayraktaroglu L."/>
            <person name="Berman B.P."/>
            <person name="Bettencourt B.R."/>
            <person name="Celniker S.E."/>
            <person name="de Grey A.D.N.J."/>
            <person name="Drysdale R.A."/>
            <person name="Harris N.L."/>
            <person name="Richter J."/>
            <person name="Russo S."/>
            <person name="Schroeder A.J."/>
            <person name="Shu S.Q."/>
            <person name="Stapleton M."/>
            <person name="Yamada C."/>
            <person name="Ashburner M."/>
            <person name="Gelbart W.M."/>
            <person name="Rubin G.M."/>
            <person name="Lewis S.E."/>
        </authorList>
    </citation>
    <scope>GENOME REANNOTATION</scope>
    <source>
        <strain>Berkeley</strain>
    </source>
</reference>
<reference key="4">
    <citation type="submission" date="2005-05" db="EMBL/GenBank/DDBJ databases">
        <authorList>
            <person name="Stapleton M."/>
            <person name="Carlson J.W."/>
            <person name="Chavez C."/>
            <person name="Frise E."/>
            <person name="George R.A."/>
            <person name="Pacleb J.M."/>
            <person name="Park S."/>
            <person name="Wan K.H."/>
            <person name="Yu C."/>
            <person name="Celniker S.E."/>
        </authorList>
    </citation>
    <scope>NUCLEOTIDE SEQUENCE [LARGE SCALE MRNA]</scope>
    <source>
        <strain>Berkeley</strain>
    </source>
</reference>
<gene>
    <name type="primary">Lip3</name>
    <name type="ORF">CG8823</name>
</gene>
<sequence length="394" mass="44901">MTRGALKVTILLVGLGLVLAGSRPISDCGERIEDDGYPMERHEVVTSDNYILTMHRIPYSPKTGESSNRPVAFLMHGMLSSSSDWVLMGPERSLAYMLADAGYDVWMGNARGNTYSKAHKYWPTYWQIFWNFSWNEIGMYDVPAMIDYVLAKTGQQQVQYVGHSQGTTVYLVMVSERPEYNDKIKSAHLLGPAAYMGNMKSPLTRAFAPILGQPNAIVEVCGSMEFMPSNKFKQDLGIEMCQATSPYADMCANEIFLIGGYDTEQLDYELLEHIKATSPAGASVNQNLHFCQEYNSGKFRKFDYTALRNPYEYGSYFPPDYKLKNAKAPVLLYYGANDWMCDVSDVRKLRDELPNMALDYLVPFEKWAHLDFIWGTEARKYVYDEVLKQMQSYE</sequence>
<dbReference type="EC" id="3.1.1.-"/>
<dbReference type="EMBL" id="Y14367">
    <property type="protein sequence ID" value="CAA74737.1"/>
    <property type="molecule type" value="mRNA"/>
</dbReference>
<dbReference type="EMBL" id="AE014297">
    <property type="protein sequence ID" value="AAF54935.1"/>
    <property type="molecule type" value="Genomic_DNA"/>
</dbReference>
<dbReference type="EMBL" id="BT023257">
    <property type="protein sequence ID" value="AAY55673.1"/>
    <property type="molecule type" value="mRNA"/>
</dbReference>
<dbReference type="RefSeq" id="NP_477331.1">
    <property type="nucleotide sequence ID" value="NM_057983.4"/>
</dbReference>
<dbReference type="SMR" id="O46108"/>
<dbReference type="BioGRID" id="66726">
    <property type="interactions" value="13"/>
</dbReference>
<dbReference type="FunCoup" id="O46108">
    <property type="interactions" value="125"/>
</dbReference>
<dbReference type="IntAct" id="O46108">
    <property type="interactions" value="12"/>
</dbReference>
<dbReference type="STRING" id="7227.FBpp0082239"/>
<dbReference type="ESTHER" id="drome-lip3">
    <property type="family name" value="Acidic_Lipase"/>
</dbReference>
<dbReference type="GlyCosmos" id="O46108">
    <property type="glycosylation" value="1 site, No reported glycans"/>
</dbReference>
<dbReference type="GlyGen" id="O46108">
    <property type="glycosylation" value="1 site"/>
</dbReference>
<dbReference type="PaxDb" id="7227-FBpp0082239"/>
<dbReference type="DNASU" id="41643"/>
<dbReference type="EnsemblMetazoa" id="FBtr0082771">
    <property type="protein sequence ID" value="FBpp0082239"/>
    <property type="gene ID" value="FBgn0023495"/>
</dbReference>
<dbReference type="GeneID" id="41643"/>
<dbReference type="KEGG" id="dme:Dmel_CG8823"/>
<dbReference type="UCSC" id="CG8823-RA">
    <property type="organism name" value="d. melanogaster"/>
</dbReference>
<dbReference type="AGR" id="FB:FBgn0023495"/>
<dbReference type="CTD" id="41643"/>
<dbReference type="FlyBase" id="FBgn0023495">
    <property type="gene designation" value="Lip3"/>
</dbReference>
<dbReference type="VEuPathDB" id="VectorBase:FBgn0023495"/>
<dbReference type="eggNOG" id="KOG2624">
    <property type="taxonomic scope" value="Eukaryota"/>
</dbReference>
<dbReference type="GeneTree" id="ENSGT00940000165260"/>
<dbReference type="HOGENOM" id="CLU_010974_0_3_1"/>
<dbReference type="InParanoid" id="O46108"/>
<dbReference type="OMA" id="LGIEMCQ"/>
<dbReference type="OrthoDB" id="9974421at2759"/>
<dbReference type="PhylomeDB" id="O46108"/>
<dbReference type="SignaLink" id="O46108"/>
<dbReference type="BioGRID-ORCS" id="41643">
    <property type="hits" value="0 hits in 3 CRISPR screens"/>
</dbReference>
<dbReference type="GenomeRNAi" id="41643"/>
<dbReference type="PRO" id="PR:O46108"/>
<dbReference type="Proteomes" id="UP000000803">
    <property type="component" value="Chromosome 3R"/>
</dbReference>
<dbReference type="Bgee" id="FBgn0023495">
    <property type="expression patterns" value="Expressed in midgut and 5 other cell types or tissues"/>
</dbReference>
<dbReference type="ExpressionAtlas" id="O46108">
    <property type="expression patterns" value="baseline and differential"/>
</dbReference>
<dbReference type="GO" id="GO:0004620">
    <property type="term" value="F:phospholipase activity"/>
    <property type="evidence" value="ECO:0000315"/>
    <property type="project" value="FlyBase"/>
</dbReference>
<dbReference type="GO" id="GO:0004806">
    <property type="term" value="F:triacylglycerol lipase activity"/>
    <property type="evidence" value="ECO:0000314"/>
    <property type="project" value="FlyBase"/>
</dbReference>
<dbReference type="GO" id="GO:0016042">
    <property type="term" value="P:lipid catabolic process"/>
    <property type="evidence" value="ECO:0000314"/>
    <property type="project" value="FlyBase"/>
</dbReference>
<dbReference type="FunFam" id="3.40.50.1820:FF:000021">
    <property type="entry name" value="Lipase"/>
    <property type="match status" value="1"/>
</dbReference>
<dbReference type="Gene3D" id="3.40.50.1820">
    <property type="entry name" value="alpha/beta hydrolase"/>
    <property type="match status" value="1"/>
</dbReference>
<dbReference type="InterPro" id="IPR029058">
    <property type="entry name" value="AB_hydrolase_fold"/>
</dbReference>
<dbReference type="InterPro" id="IPR006693">
    <property type="entry name" value="AB_hydrolase_lipase"/>
</dbReference>
<dbReference type="InterPro" id="IPR025483">
    <property type="entry name" value="Lipase_euk"/>
</dbReference>
<dbReference type="PANTHER" id="PTHR11005">
    <property type="entry name" value="LYSOSOMAL ACID LIPASE-RELATED"/>
    <property type="match status" value="1"/>
</dbReference>
<dbReference type="Pfam" id="PF04083">
    <property type="entry name" value="Abhydro_lipase"/>
    <property type="match status" value="1"/>
</dbReference>
<dbReference type="PIRSF" id="PIRSF000862">
    <property type="entry name" value="Steryl_ester_lip"/>
    <property type="match status" value="1"/>
</dbReference>
<dbReference type="SUPFAM" id="SSF53474">
    <property type="entry name" value="alpha/beta-Hydrolases"/>
    <property type="match status" value="1"/>
</dbReference>
<dbReference type="PROSITE" id="PS00120">
    <property type="entry name" value="LIPASE_SER"/>
    <property type="match status" value="1"/>
</dbReference>
<organism>
    <name type="scientific">Drosophila melanogaster</name>
    <name type="common">Fruit fly</name>
    <dbReference type="NCBI Taxonomy" id="7227"/>
    <lineage>
        <taxon>Eukaryota</taxon>
        <taxon>Metazoa</taxon>
        <taxon>Ecdysozoa</taxon>
        <taxon>Arthropoda</taxon>
        <taxon>Hexapoda</taxon>
        <taxon>Insecta</taxon>
        <taxon>Pterygota</taxon>
        <taxon>Neoptera</taxon>
        <taxon>Endopterygota</taxon>
        <taxon>Diptera</taxon>
        <taxon>Brachycera</taxon>
        <taxon>Muscomorpha</taxon>
        <taxon>Ephydroidea</taxon>
        <taxon>Drosophilidae</taxon>
        <taxon>Drosophila</taxon>
        <taxon>Sophophora</taxon>
    </lineage>
</organism>
<comment type="tissue specificity">
    <text evidence="3">Fat body.</text>
</comment>
<comment type="developmental stage">
    <text evidence="3">Only at larval stages.</text>
</comment>
<comment type="similarity">
    <text evidence="4">Belongs to the AB hydrolase superfamily. Lipase family.</text>
</comment>
<accession>O46108</accession>
<accession>Q4V3U9</accession>
<feature type="signal peptide" evidence="1">
    <location>
        <begin position="1"/>
        <end position="20"/>
    </location>
</feature>
<feature type="chain" id="PRO_0000017811" description="Lipase 3">
    <location>
        <begin position="21"/>
        <end position="394"/>
    </location>
</feature>
<feature type="active site" description="Charge relay system" evidence="2">
    <location>
        <position position="164"/>
    </location>
</feature>
<feature type="active site" description="Charge relay system" evidence="2">
    <location>
        <position position="369"/>
    </location>
</feature>
<feature type="glycosylation site" description="N-linked (GlcNAc...) asparagine" evidence="1">
    <location>
        <position position="131"/>
    </location>
</feature>
<keyword id="KW-0325">Glycoprotein</keyword>
<keyword id="KW-0378">Hydrolase</keyword>
<keyword id="KW-0442">Lipid degradation</keyword>
<keyword id="KW-0443">Lipid metabolism</keyword>
<keyword id="KW-1185">Reference proteome</keyword>
<keyword id="KW-0732">Signal</keyword>
<name>LIP3_DROME</name>